<gene>
    <name type="primary">Lyz2</name>
</gene>
<comment type="function">
    <text>Lysozymes have primarily a bacteriolytic function; those in tissues and body fluids are associated with the monocyte-macrophage system and enhance the activity of immunoagents. In the intestine they may also have a digestive function.</text>
</comment>
<comment type="catalytic activity">
    <reaction>
        <text>Hydrolysis of (1-&gt;4)-beta-linkages between N-acetylmuramic acid and N-acetyl-D-glucosamine residues in a peptidoglycan and between N-acetyl-D-glucosamine residues in chitodextrins.</text>
        <dbReference type="EC" id="3.2.1.17"/>
    </reaction>
</comment>
<comment type="subunit">
    <text>Monomer.</text>
</comment>
<comment type="subcellular location">
    <subcellularLocation>
        <location evidence="1">Secreted</location>
    </subcellularLocation>
</comment>
<comment type="miscellaneous">
    <text>Lysozyme C is capable of both hydrolysis and transglycosylation; it also shows a slight esterase activity. It acts rapidly on both peptide-substituted and unsubstituted peptidoglycan, and slowly on chitin oligosaccharides.</text>
</comment>
<comment type="similarity">
    <text evidence="2">Belongs to the glycosyl hydrolase 22 family.</text>
</comment>
<comment type="caution">
    <text evidence="3">Could be the product of a pseudogene. Lyz1 has been shown to be expressed, but not Lyz2.</text>
</comment>
<accession>Q05820</accession>
<proteinExistence type="uncertain"/>
<evidence type="ECO:0000250" key="1"/>
<evidence type="ECO:0000255" key="2">
    <source>
        <dbReference type="PROSITE-ProRule" id="PRU00680"/>
    </source>
</evidence>
<evidence type="ECO:0000305" key="3"/>
<dbReference type="EC" id="3.2.1.17"/>
<dbReference type="EMBL" id="L12458">
    <property type="protein sequence ID" value="AAA41552.1"/>
    <property type="molecule type" value="Genomic_DNA"/>
</dbReference>
<dbReference type="PIR" id="B40729">
    <property type="entry name" value="B40729"/>
</dbReference>
<dbReference type="RefSeq" id="XP_006241454.1">
    <property type="nucleotide sequence ID" value="XM_006241392.3"/>
</dbReference>
<dbReference type="SMR" id="Q05820"/>
<dbReference type="FunCoup" id="Q05820">
    <property type="interactions" value="8"/>
</dbReference>
<dbReference type="CAZy" id="GH22">
    <property type="family name" value="Glycoside Hydrolase Family 22"/>
</dbReference>
<dbReference type="PhosphoSitePlus" id="Q05820"/>
<dbReference type="PaxDb" id="10116-ENSRNOP00000059657"/>
<dbReference type="AGR" id="RGD:1593616"/>
<dbReference type="eggNOG" id="ENOG502S1S1">
    <property type="taxonomic scope" value="Eukaryota"/>
</dbReference>
<dbReference type="InParanoid" id="Q05820"/>
<dbReference type="OrthoDB" id="17373at2759"/>
<dbReference type="Proteomes" id="UP000002494">
    <property type="component" value="Unplaced"/>
</dbReference>
<dbReference type="GO" id="GO:0005576">
    <property type="term" value="C:extracellular region"/>
    <property type="evidence" value="ECO:0007669"/>
    <property type="project" value="UniProtKB-SubCell"/>
</dbReference>
<dbReference type="GO" id="GO:0003796">
    <property type="term" value="F:lysozyme activity"/>
    <property type="evidence" value="ECO:0000318"/>
    <property type="project" value="GO_Central"/>
</dbReference>
<dbReference type="GO" id="GO:0050829">
    <property type="term" value="P:defense response to Gram-negative bacterium"/>
    <property type="evidence" value="ECO:0000318"/>
    <property type="project" value="GO_Central"/>
</dbReference>
<dbReference type="GO" id="GO:0050830">
    <property type="term" value="P:defense response to Gram-positive bacterium"/>
    <property type="evidence" value="ECO:0000318"/>
    <property type="project" value="GO_Central"/>
</dbReference>
<dbReference type="GO" id="GO:0031640">
    <property type="term" value="P:killing of cells of another organism"/>
    <property type="evidence" value="ECO:0007669"/>
    <property type="project" value="UniProtKB-KW"/>
</dbReference>
<dbReference type="CDD" id="cd16897">
    <property type="entry name" value="LYZ_C"/>
    <property type="match status" value="1"/>
</dbReference>
<dbReference type="FunFam" id="1.10.530.10:FF:000001">
    <property type="entry name" value="Lysozyme C"/>
    <property type="match status" value="1"/>
</dbReference>
<dbReference type="Gene3D" id="1.10.530.10">
    <property type="match status" value="1"/>
</dbReference>
<dbReference type="InterPro" id="IPR001916">
    <property type="entry name" value="Glyco_hydro_22"/>
</dbReference>
<dbReference type="InterPro" id="IPR019799">
    <property type="entry name" value="Glyco_hydro_22_CS"/>
</dbReference>
<dbReference type="InterPro" id="IPR000974">
    <property type="entry name" value="Glyco_hydro_22_lys"/>
</dbReference>
<dbReference type="InterPro" id="IPR023346">
    <property type="entry name" value="Lysozyme-like_dom_sf"/>
</dbReference>
<dbReference type="PANTHER" id="PTHR11407">
    <property type="entry name" value="LYSOZYME C"/>
    <property type="match status" value="1"/>
</dbReference>
<dbReference type="PANTHER" id="PTHR11407:SF28">
    <property type="entry name" value="LYSOZYME C"/>
    <property type="match status" value="1"/>
</dbReference>
<dbReference type="Pfam" id="PF00062">
    <property type="entry name" value="Lys"/>
    <property type="match status" value="1"/>
</dbReference>
<dbReference type="PRINTS" id="PR00137">
    <property type="entry name" value="LYSOZYME"/>
</dbReference>
<dbReference type="PRINTS" id="PR00135">
    <property type="entry name" value="LYZLACT"/>
</dbReference>
<dbReference type="SMART" id="SM00263">
    <property type="entry name" value="LYZ1"/>
    <property type="match status" value="1"/>
</dbReference>
<dbReference type="SUPFAM" id="SSF53955">
    <property type="entry name" value="Lysozyme-like"/>
    <property type="match status" value="1"/>
</dbReference>
<dbReference type="PROSITE" id="PS00128">
    <property type="entry name" value="GLYCOSYL_HYDROL_F22_1"/>
    <property type="match status" value="1"/>
</dbReference>
<dbReference type="PROSITE" id="PS51348">
    <property type="entry name" value="GLYCOSYL_HYDROL_F22_2"/>
    <property type="match status" value="1"/>
</dbReference>
<feature type="signal peptide" evidence="1">
    <location>
        <begin position="1"/>
        <end position="18"/>
    </location>
</feature>
<feature type="chain" id="PRO_0000018485" description="Putative lysozyme C-2">
    <location>
        <begin position="19"/>
        <end position="148"/>
    </location>
</feature>
<feature type="domain" description="C-type lysozyme" evidence="2">
    <location>
        <begin position="19"/>
        <end position="148"/>
    </location>
</feature>
<feature type="active site" evidence="2">
    <location>
        <position position="53"/>
    </location>
</feature>
<feature type="active site" evidence="2">
    <location>
        <position position="71"/>
    </location>
</feature>
<feature type="disulfide bond" evidence="2">
    <location>
        <begin position="24"/>
        <end position="146"/>
    </location>
</feature>
<feature type="disulfide bond" evidence="2">
    <location>
        <begin position="48"/>
        <end position="134"/>
    </location>
</feature>
<feature type="disulfide bond" evidence="2">
    <location>
        <begin position="83"/>
        <end position="99"/>
    </location>
</feature>
<feature type="disulfide bond" evidence="2">
    <location>
        <begin position="95"/>
        <end position="113"/>
    </location>
</feature>
<name>LYSC2_RAT</name>
<keyword id="KW-0929">Antimicrobial</keyword>
<keyword id="KW-0081">Bacteriolytic enzyme</keyword>
<keyword id="KW-1015">Disulfide bond</keyword>
<keyword id="KW-0326">Glycosidase</keyword>
<keyword id="KW-0378">Hydrolase</keyword>
<keyword id="KW-1185">Reference proteome</keyword>
<keyword id="KW-0964">Secreted</keyword>
<keyword id="KW-0732">Signal</keyword>
<protein>
    <recommendedName>
        <fullName>Putative lysozyme C-2</fullName>
        <ecNumber>3.2.1.17</ecNumber>
    </recommendedName>
    <alternativeName>
        <fullName>1,4-beta-N-acetylmuramidase C</fullName>
    </alternativeName>
</protein>
<reference key="1">
    <citation type="journal article" date="1993" name="Mol. Phylogenet. Evol.">
        <title>Evolution of rodent lysozymes: isolation and sequence of the rat lysozyme genes.</title>
        <authorList>
            <person name="Yeh T.C."/>
            <person name="Wilson A.C."/>
            <person name="Irwin D.M."/>
        </authorList>
    </citation>
    <scope>NUCLEOTIDE SEQUENCE [GENOMIC DNA]</scope>
    <source>
        <strain>Sprague-Dawley</strain>
    </source>
</reference>
<organism>
    <name type="scientific">Rattus norvegicus</name>
    <name type="common">Rat</name>
    <dbReference type="NCBI Taxonomy" id="10116"/>
    <lineage>
        <taxon>Eukaryota</taxon>
        <taxon>Metazoa</taxon>
        <taxon>Chordata</taxon>
        <taxon>Craniata</taxon>
        <taxon>Vertebrata</taxon>
        <taxon>Euteleostomi</taxon>
        <taxon>Mammalia</taxon>
        <taxon>Eutheria</taxon>
        <taxon>Euarchontoglires</taxon>
        <taxon>Glires</taxon>
        <taxon>Rodentia</taxon>
        <taxon>Myomorpha</taxon>
        <taxon>Muroidea</taxon>
        <taxon>Muridae</taxon>
        <taxon>Murinae</taxon>
        <taxon>Rattus</taxon>
    </lineage>
</organism>
<sequence>MKALLVLGFLLLSASVQAKVFKHCELARILRSSALAGYRGVSLENWMCMAQHESNFDTEAINYNSTDQSTDYGIFQINSRYWCNDGKTPRAVNACGIPCSALLQDDITQAIQCAKRVVRDPQGIRAWVAWQRHCQNRDLSGYIRNCGV</sequence>